<name>LYG2_MOUSE</name>
<reference key="1">
    <citation type="journal article" date="2005" name="Science">
        <title>The transcriptional landscape of the mammalian genome.</title>
        <authorList>
            <person name="Carninci P."/>
            <person name="Kasukawa T."/>
            <person name="Katayama S."/>
            <person name="Gough J."/>
            <person name="Frith M.C."/>
            <person name="Maeda N."/>
            <person name="Oyama R."/>
            <person name="Ravasi T."/>
            <person name="Lenhard B."/>
            <person name="Wells C."/>
            <person name="Kodzius R."/>
            <person name="Shimokawa K."/>
            <person name="Bajic V.B."/>
            <person name="Brenner S.E."/>
            <person name="Batalov S."/>
            <person name="Forrest A.R."/>
            <person name="Zavolan M."/>
            <person name="Davis M.J."/>
            <person name="Wilming L.G."/>
            <person name="Aidinis V."/>
            <person name="Allen J.E."/>
            <person name="Ambesi-Impiombato A."/>
            <person name="Apweiler R."/>
            <person name="Aturaliya R.N."/>
            <person name="Bailey T.L."/>
            <person name="Bansal M."/>
            <person name="Baxter L."/>
            <person name="Beisel K.W."/>
            <person name="Bersano T."/>
            <person name="Bono H."/>
            <person name="Chalk A.M."/>
            <person name="Chiu K.P."/>
            <person name="Choudhary V."/>
            <person name="Christoffels A."/>
            <person name="Clutterbuck D.R."/>
            <person name="Crowe M.L."/>
            <person name="Dalla E."/>
            <person name="Dalrymple B.P."/>
            <person name="de Bono B."/>
            <person name="Della Gatta G."/>
            <person name="di Bernardo D."/>
            <person name="Down T."/>
            <person name="Engstrom P."/>
            <person name="Fagiolini M."/>
            <person name="Faulkner G."/>
            <person name="Fletcher C.F."/>
            <person name="Fukushima T."/>
            <person name="Furuno M."/>
            <person name="Futaki S."/>
            <person name="Gariboldi M."/>
            <person name="Georgii-Hemming P."/>
            <person name="Gingeras T.R."/>
            <person name="Gojobori T."/>
            <person name="Green R.E."/>
            <person name="Gustincich S."/>
            <person name="Harbers M."/>
            <person name="Hayashi Y."/>
            <person name="Hensch T.K."/>
            <person name="Hirokawa N."/>
            <person name="Hill D."/>
            <person name="Huminiecki L."/>
            <person name="Iacono M."/>
            <person name="Ikeo K."/>
            <person name="Iwama A."/>
            <person name="Ishikawa T."/>
            <person name="Jakt M."/>
            <person name="Kanapin A."/>
            <person name="Katoh M."/>
            <person name="Kawasawa Y."/>
            <person name="Kelso J."/>
            <person name="Kitamura H."/>
            <person name="Kitano H."/>
            <person name="Kollias G."/>
            <person name="Krishnan S.P."/>
            <person name="Kruger A."/>
            <person name="Kummerfeld S.K."/>
            <person name="Kurochkin I.V."/>
            <person name="Lareau L.F."/>
            <person name="Lazarevic D."/>
            <person name="Lipovich L."/>
            <person name="Liu J."/>
            <person name="Liuni S."/>
            <person name="McWilliam S."/>
            <person name="Madan Babu M."/>
            <person name="Madera M."/>
            <person name="Marchionni L."/>
            <person name="Matsuda H."/>
            <person name="Matsuzawa S."/>
            <person name="Miki H."/>
            <person name="Mignone F."/>
            <person name="Miyake S."/>
            <person name="Morris K."/>
            <person name="Mottagui-Tabar S."/>
            <person name="Mulder N."/>
            <person name="Nakano N."/>
            <person name="Nakauchi H."/>
            <person name="Ng P."/>
            <person name="Nilsson R."/>
            <person name="Nishiguchi S."/>
            <person name="Nishikawa S."/>
            <person name="Nori F."/>
            <person name="Ohara O."/>
            <person name="Okazaki Y."/>
            <person name="Orlando V."/>
            <person name="Pang K.C."/>
            <person name="Pavan W.J."/>
            <person name="Pavesi G."/>
            <person name="Pesole G."/>
            <person name="Petrovsky N."/>
            <person name="Piazza S."/>
            <person name="Reed J."/>
            <person name="Reid J.F."/>
            <person name="Ring B.Z."/>
            <person name="Ringwald M."/>
            <person name="Rost B."/>
            <person name="Ruan Y."/>
            <person name="Salzberg S.L."/>
            <person name="Sandelin A."/>
            <person name="Schneider C."/>
            <person name="Schoenbach C."/>
            <person name="Sekiguchi K."/>
            <person name="Semple C.A."/>
            <person name="Seno S."/>
            <person name="Sessa L."/>
            <person name="Sheng Y."/>
            <person name="Shibata Y."/>
            <person name="Shimada H."/>
            <person name="Shimada K."/>
            <person name="Silva D."/>
            <person name="Sinclair B."/>
            <person name="Sperling S."/>
            <person name="Stupka E."/>
            <person name="Sugiura K."/>
            <person name="Sultana R."/>
            <person name="Takenaka Y."/>
            <person name="Taki K."/>
            <person name="Tammoja K."/>
            <person name="Tan S.L."/>
            <person name="Tang S."/>
            <person name="Taylor M.S."/>
            <person name="Tegner J."/>
            <person name="Teichmann S.A."/>
            <person name="Ueda H.R."/>
            <person name="van Nimwegen E."/>
            <person name="Verardo R."/>
            <person name="Wei C.L."/>
            <person name="Yagi K."/>
            <person name="Yamanishi H."/>
            <person name="Zabarovsky E."/>
            <person name="Zhu S."/>
            <person name="Zimmer A."/>
            <person name="Hide W."/>
            <person name="Bult C."/>
            <person name="Grimmond S.M."/>
            <person name="Teasdale R.D."/>
            <person name="Liu E.T."/>
            <person name="Brusic V."/>
            <person name="Quackenbush J."/>
            <person name="Wahlestedt C."/>
            <person name="Mattick J.S."/>
            <person name="Hume D.A."/>
            <person name="Kai C."/>
            <person name="Sasaki D."/>
            <person name="Tomaru Y."/>
            <person name="Fukuda S."/>
            <person name="Kanamori-Katayama M."/>
            <person name="Suzuki M."/>
            <person name="Aoki J."/>
            <person name="Arakawa T."/>
            <person name="Iida J."/>
            <person name="Imamura K."/>
            <person name="Itoh M."/>
            <person name="Kato T."/>
            <person name="Kawaji H."/>
            <person name="Kawagashira N."/>
            <person name="Kawashima T."/>
            <person name="Kojima M."/>
            <person name="Kondo S."/>
            <person name="Konno H."/>
            <person name="Nakano K."/>
            <person name="Ninomiya N."/>
            <person name="Nishio T."/>
            <person name="Okada M."/>
            <person name="Plessy C."/>
            <person name="Shibata K."/>
            <person name="Shiraki T."/>
            <person name="Suzuki S."/>
            <person name="Tagami M."/>
            <person name="Waki K."/>
            <person name="Watahiki A."/>
            <person name="Okamura-Oho Y."/>
            <person name="Suzuki H."/>
            <person name="Kawai J."/>
            <person name="Hayashizaki Y."/>
        </authorList>
    </citation>
    <scope>NUCLEOTIDE SEQUENCE [LARGE SCALE MRNA]</scope>
    <source>
        <strain>C57BL/6J</strain>
        <tissue>Skin</tissue>
    </source>
</reference>
<reference key="2">
    <citation type="journal article" date="2004" name="Genome Res.">
        <title>The status, quality, and expansion of the NIH full-length cDNA project: the Mammalian Gene Collection (MGC).</title>
        <authorList>
            <consortium name="The MGC Project Team"/>
        </authorList>
    </citation>
    <scope>NUCLEOTIDE SEQUENCE [LARGE SCALE MRNA]</scope>
    <source>
        <tissue>Brain</tissue>
    </source>
</reference>
<dbReference type="EC" id="3.2.1.-"/>
<dbReference type="EMBL" id="AK132442">
    <property type="protein sequence ID" value="BAE21171.1"/>
    <property type="molecule type" value="mRNA"/>
</dbReference>
<dbReference type="EMBL" id="BC147562">
    <property type="protein sequence ID" value="AAI47563.1"/>
    <property type="molecule type" value="mRNA"/>
</dbReference>
<dbReference type="EMBL" id="BC147567">
    <property type="protein sequence ID" value="AAI47568.1"/>
    <property type="molecule type" value="mRNA"/>
</dbReference>
<dbReference type="CCDS" id="CCDS14897.1"/>
<dbReference type="RefSeq" id="NP_001028599.1">
    <property type="nucleotide sequence ID" value="NM_001033427.3"/>
</dbReference>
<dbReference type="SMR" id="Q3V1I0"/>
<dbReference type="FunCoup" id="Q3V1I0">
    <property type="interactions" value="306"/>
</dbReference>
<dbReference type="STRING" id="10090.ENSMUSP00000077422"/>
<dbReference type="CAZy" id="GH23">
    <property type="family name" value="Glycoside Hydrolase Family 23"/>
</dbReference>
<dbReference type="iPTMnet" id="Q3V1I0"/>
<dbReference type="PhosphoSitePlus" id="Q3V1I0"/>
<dbReference type="PaxDb" id="10090-ENSMUSP00000077422"/>
<dbReference type="ProteomicsDB" id="295735"/>
<dbReference type="Antibodypedia" id="32804">
    <property type="antibodies" value="61 antibodies from 14 providers"/>
</dbReference>
<dbReference type="Ensembl" id="ENSMUST00000078307.7">
    <property type="protein sequence ID" value="ENSMUSP00000077422.6"/>
    <property type="gene ID" value="ENSMUSG00000061584.7"/>
</dbReference>
<dbReference type="GeneID" id="332427"/>
<dbReference type="KEGG" id="mmu:332427"/>
<dbReference type="UCSC" id="uc007ask.1">
    <property type="organism name" value="mouse"/>
</dbReference>
<dbReference type="AGR" id="MGI:2685622"/>
<dbReference type="CTD" id="254773"/>
<dbReference type="MGI" id="MGI:2685622">
    <property type="gene designation" value="Lyg2"/>
</dbReference>
<dbReference type="VEuPathDB" id="HostDB:ENSMUSG00000061584"/>
<dbReference type="eggNOG" id="ENOG502RZXI">
    <property type="taxonomic scope" value="Eukaryota"/>
</dbReference>
<dbReference type="GeneTree" id="ENSGT00390000017614"/>
<dbReference type="HOGENOM" id="CLU_089081_0_0_1"/>
<dbReference type="InParanoid" id="Q3V1I0"/>
<dbReference type="OMA" id="IMTMETP"/>
<dbReference type="OrthoDB" id="10021790at2759"/>
<dbReference type="PhylomeDB" id="Q3V1I0"/>
<dbReference type="TreeFam" id="TF329826"/>
<dbReference type="BioGRID-ORCS" id="332427">
    <property type="hits" value="1 hit in 77 CRISPR screens"/>
</dbReference>
<dbReference type="PRO" id="PR:Q3V1I0"/>
<dbReference type="Proteomes" id="UP000000589">
    <property type="component" value="Chromosome 1"/>
</dbReference>
<dbReference type="RNAct" id="Q3V1I0">
    <property type="molecule type" value="protein"/>
</dbReference>
<dbReference type="Bgee" id="ENSMUSG00000061584">
    <property type="expression patterns" value="Expressed in lip and 6 other cell types or tissues"/>
</dbReference>
<dbReference type="GO" id="GO:0005576">
    <property type="term" value="C:extracellular region"/>
    <property type="evidence" value="ECO:0007669"/>
    <property type="project" value="UniProtKB-SubCell"/>
</dbReference>
<dbReference type="GO" id="GO:0003796">
    <property type="term" value="F:lysozyme activity"/>
    <property type="evidence" value="ECO:0007669"/>
    <property type="project" value="Ensembl"/>
</dbReference>
<dbReference type="GO" id="GO:0050830">
    <property type="term" value="P:defense response to Gram-positive bacterium"/>
    <property type="evidence" value="ECO:0007669"/>
    <property type="project" value="Ensembl"/>
</dbReference>
<dbReference type="GO" id="GO:0009253">
    <property type="term" value="P:peptidoglycan catabolic process"/>
    <property type="evidence" value="ECO:0007669"/>
    <property type="project" value="InterPro"/>
</dbReference>
<dbReference type="CDD" id="cd01021">
    <property type="entry name" value="GEWL"/>
    <property type="match status" value="1"/>
</dbReference>
<dbReference type="FunFam" id="1.10.530.10:FF:000018">
    <property type="entry name" value="Lysozyme g-like 2"/>
    <property type="match status" value="1"/>
</dbReference>
<dbReference type="Gene3D" id="1.10.530.10">
    <property type="match status" value="1"/>
</dbReference>
<dbReference type="InterPro" id="IPR002152">
    <property type="entry name" value="Glyco_hydro_23"/>
</dbReference>
<dbReference type="InterPro" id="IPR023346">
    <property type="entry name" value="Lysozyme-like_dom_sf"/>
</dbReference>
<dbReference type="PANTHER" id="PTHR31698">
    <property type="entry name" value="LYSOZYME G FAMILY MEMBER"/>
    <property type="match status" value="1"/>
</dbReference>
<dbReference type="PANTHER" id="PTHR31698:SF4">
    <property type="entry name" value="LYSOZYME G-LIKE PROTEIN 2"/>
    <property type="match status" value="1"/>
</dbReference>
<dbReference type="PIRSF" id="PIRSF001065">
    <property type="entry name" value="Lysozyme_g"/>
    <property type="match status" value="1"/>
</dbReference>
<dbReference type="PRINTS" id="PR00749">
    <property type="entry name" value="LYSOZYMEG"/>
</dbReference>
<dbReference type="SUPFAM" id="SSF53955">
    <property type="entry name" value="Lysozyme-like"/>
    <property type="match status" value="1"/>
</dbReference>
<comment type="function">
    <text evidence="2">May act as a potent antibacterial protein that may play a role in the innate immunity.</text>
</comment>
<comment type="subcellular location">
    <subcellularLocation>
        <location evidence="4">Secreted</location>
    </subcellularLocation>
</comment>
<comment type="similarity">
    <text evidence="4">Belongs to the glycosyl hydrolase 23 family.</text>
</comment>
<proteinExistence type="evidence at transcript level"/>
<keyword id="KW-1015">Disulfide bond</keyword>
<keyword id="KW-0326">Glycosidase</keyword>
<keyword id="KW-0378">Hydrolase</keyword>
<keyword id="KW-1185">Reference proteome</keyword>
<keyword id="KW-0964">Secreted</keyword>
<keyword id="KW-0732">Signal</keyword>
<gene>
    <name type="primary">Lyg2</name>
    <name type="synonym">Gm776</name>
</gene>
<accession>Q3V1I0</accession>
<accession>B9EJU6</accession>
<evidence type="ECO:0000250" key="1"/>
<evidence type="ECO:0000250" key="2">
    <source>
        <dbReference type="UniProtKB" id="Q86SG7"/>
    </source>
</evidence>
<evidence type="ECO:0000255" key="3"/>
<evidence type="ECO:0000305" key="4"/>
<protein>
    <recommendedName>
        <fullName>Lysozyme g-like protein 2</fullName>
        <ecNumber>3.2.1.-</ecNumber>
    </recommendedName>
</protein>
<feature type="signal peptide" evidence="3">
    <location>
        <begin position="1"/>
        <end position="19"/>
    </location>
</feature>
<feature type="chain" id="PRO_0000287122" description="Lysozyme g-like protein 2">
    <location>
        <begin position="20"/>
        <end position="213"/>
    </location>
</feature>
<feature type="active site" evidence="1">
    <location>
        <position position="106"/>
    </location>
</feature>
<feature type="disulfide bond" evidence="1">
    <location>
        <begin position="40"/>
        <end position="93"/>
    </location>
</feature>
<feature type="disulfide bond" evidence="1">
    <location>
        <begin position="54"/>
        <end position="62"/>
    </location>
</feature>
<sequence length="213" mass="23762">MVPSVVFWGLIALVGTAKGSYTHSVHSMNPHVHPRLYHGCYGDIMTMETFGAPCDINNLMNCGIHGSEMFAEMDLKAIKPYRILIKEVGQRHCIDPALIAAIISRESHGGAVLQNGWDHKGQRFGLMQLDKNMYHPIGSWDSKEHLLQSVGILTERIKAMKRKFPTWNTAQQLKGGLTAFKSGMETIVTPADIDGDLVDDVLARAKFYKRHGF</sequence>
<organism>
    <name type="scientific">Mus musculus</name>
    <name type="common">Mouse</name>
    <dbReference type="NCBI Taxonomy" id="10090"/>
    <lineage>
        <taxon>Eukaryota</taxon>
        <taxon>Metazoa</taxon>
        <taxon>Chordata</taxon>
        <taxon>Craniata</taxon>
        <taxon>Vertebrata</taxon>
        <taxon>Euteleostomi</taxon>
        <taxon>Mammalia</taxon>
        <taxon>Eutheria</taxon>
        <taxon>Euarchontoglires</taxon>
        <taxon>Glires</taxon>
        <taxon>Rodentia</taxon>
        <taxon>Myomorpha</taxon>
        <taxon>Muroidea</taxon>
        <taxon>Muridae</taxon>
        <taxon>Murinae</taxon>
        <taxon>Mus</taxon>
        <taxon>Mus</taxon>
    </lineage>
</organism>